<keyword id="KW-1185">Reference proteome</keyword>
<keyword id="KW-0687">Ribonucleoprotein</keyword>
<keyword id="KW-0689">Ribosomal protein</keyword>
<keyword id="KW-0694">RNA-binding</keyword>
<keyword id="KW-0699">rRNA-binding</keyword>
<evidence type="ECO:0000255" key="1">
    <source>
        <dbReference type="HAMAP-Rule" id="MF_00382"/>
    </source>
</evidence>
<evidence type="ECO:0000305" key="2"/>
<organism>
    <name type="scientific">Natranaerobius thermophilus (strain ATCC BAA-1301 / DSM 18059 / JW/NM-WN-LF)</name>
    <dbReference type="NCBI Taxonomy" id="457570"/>
    <lineage>
        <taxon>Bacteria</taxon>
        <taxon>Bacillati</taxon>
        <taxon>Bacillota</taxon>
        <taxon>Clostridia</taxon>
        <taxon>Natranaerobiales</taxon>
        <taxon>Natranaerobiaceae</taxon>
        <taxon>Natranaerobius</taxon>
    </lineage>
</organism>
<reference key="1">
    <citation type="submission" date="2008-04" db="EMBL/GenBank/DDBJ databases">
        <title>Complete sequence of chromosome of Natranaerobius thermophilus JW/NM-WN-LF.</title>
        <authorList>
            <consortium name="US DOE Joint Genome Institute"/>
            <person name="Copeland A."/>
            <person name="Lucas S."/>
            <person name="Lapidus A."/>
            <person name="Glavina del Rio T."/>
            <person name="Dalin E."/>
            <person name="Tice H."/>
            <person name="Bruce D."/>
            <person name="Goodwin L."/>
            <person name="Pitluck S."/>
            <person name="Chertkov O."/>
            <person name="Brettin T."/>
            <person name="Detter J.C."/>
            <person name="Han C."/>
            <person name="Kuske C.R."/>
            <person name="Schmutz J."/>
            <person name="Larimer F."/>
            <person name="Land M."/>
            <person name="Hauser L."/>
            <person name="Kyrpides N."/>
            <person name="Lykidis A."/>
            <person name="Mesbah N.M."/>
            <person name="Wiegel J."/>
        </authorList>
    </citation>
    <scope>NUCLEOTIDE SEQUENCE [LARGE SCALE GENOMIC DNA]</scope>
    <source>
        <strain>ATCC BAA-1301 / DSM 18059 / JW/NM-WN-LF</strain>
    </source>
</reference>
<accession>B2A5N9</accession>
<dbReference type="EMBL" id="CP001034">
    <property type="protein sequence ID" value="ACB85393.1"/>
    <property type="molecule type" value="Genomic_DNA"/>
</dbReference>
<dbReference type="RefSeq" id="WP_012448259.1">
    <property type="nucleotide sequence ID" value="NC_010718.1"/>
</dbReference>
<dbReference type="SMR" id="B2A5N9"/>
<dbReference type="FunCoup" id="B2A5N9">
    <property type="interactions" value="416"/>
</dbReference>
<dbReference type="STRING" id="457570.Nther_1821"/>
<dbReference type="KEGG" id="nth:Nther_1821"/>
<dbReference type="eggNOG" id="COG0292">
    <property type="taxonomic scope" value="Bacteria"/>
</dbReference>
<dbReference type="HOGENOM" id="CLU_123265_0_1_9"/>
<dbReference type="InParanoid" id="B2A5N9"/>
<dbReference type="OrthoDB" id="9808966at2"/>
<dbReference type="Proteomes" id="UP000001683">
    <property type="component" value="Chromosome"/>
</dbReference>
<dbReference type="GO" id="GO:1990904">
    <property type="term" value="C:ribonucleoprotein complex"/>
    <property type="evidence" value="ECO:0007669"/>
    <property type="project" value="UniProtKB-KW"/>
</dbReference>
<dbReference type="GO" id="GO:0005840">
    <property type="term" value="C:ribosome"/>
    <property type="evidence" value="ECO:0007669"/>
    <property type="project" value="UniProtKB-KW"/>
</dbReference>
<dbReference type="GO" id="GO:0019843">
    <property type="term" value="F:rRNA binding"/>
    <property type="evidence" value="ECO:0007669"/>
    <property type="project" value="UniProtKB-UniRule"/>
</dbReference>
<dbReference type="GO" id="GO:0003735">
    <property type="term" value="F:structural constituent of ribosome"/>
    <property type="evidence" value="ECO:0007669"/>
    <property type="project" value="InterPro"/>
</dbReference>
<dbReference type="GO" id="GO:0000027">
    <property type="term" value="P:ribosomal large subunit assembly"/>
    <property type="evidence" value="ECO:0007669"/>
    <property type="project" value="UniProtKB-UniRule"/>
</dbReference>
<dbReference type="GO" id="GO:0006412">
    <property type="term" value="P:translation"/>
    <property type="evidence" value="ECO:0007669"/>
    <property type="project" value="InterPro"/>
</dbReference>
<dbReference type="CDD" id="cd07026">
    <property type="entry name" value="Ribosomal_L20"/>
    <property type="match status" value="1"/>
</dbReference>
<dbReference type="FunFam" id="1.10.1900.20:FF:000001">
    <property type="entry name" value="50S ribosomal protein L20"/>
    <property type="match status" value="1"/>
</dbReference>
<dbReference type="Gene3D" id="6.10.160.10">
    <property type="match status" value="1"/>
</dbReference>
<dbReference type="Gene3D" id="1.10.1900.20">
    <property type="entry name" value="Ribosomal protein L20"/>
    <property type="match status" value="1"/>
</dbReference>
<dbReference type="HAMAP" id="MF_00382">
    <property type="entry name" value="Ribosomal_bL20"/>
    <property type="match status" value="1"/>
</dbReference>
<dbReference type="InterPro" id="IPR005813">
    <property type="entry name" value="Ribosomal_bL20"/>
</dbReference>
<dbReference type="InterPro" id="IPR049946">
    <property type="entry name" value="RIBOSOMAL_L20_CS"/>
</dbReference>
<dbReference type="InterPro" id="IPR035566">
    <property type="entry name" value="Ribosomal_protein_bL20_C"/>
</dbReference>
<dbReference type="NCBIfam" id="TIGR01032">
    <property type="entry name" value="rplT_bact"/>
    <property type="match status" value="1"/>
</dbReference>
<dbReference type="PANTHER" id="PTHR10986">
    <property type="entry name" value="39S RIBOSOMAL PROTEIN L20"/>
    <property type="match status" value="1"/>
</dbReference>
<dbReference type="Pfam" id="PF00453">
    <property type="entry name" value="Ribosomal_L20"/>
    <property type="match status" value="1"/>
</dbReference>
<dbReference type="PRINTS" id="PR00062">
    <property type="entry name" value="RIBOSOMALL20"/>
</dbReference>
<dbReference type="SUPFAM" id="SSF74731">
    <property type="entry name" value="Ribosomal protein L20"/>
    <property type="match status" value="1"/>
</dbReference>
<dbReference type="PROSITE" id="PS00937">
    <property type="entry name" value="RIBOSOMAL_L20"/>
    <property type="match status" value="1"/>
</dbReference>
<feature type="chain" id="PRO_1000122344" description="Large ribosomal subunit protein bL20">
    <location>
        <begin position="1"/>
        <end position="117"/>
    </location>
</feature>
<name>RL20_NATTJ</name>
<gene>
    <name evidence="1" type="primary">rplT</name>
    <name type="ordered locus">Nther_1821</name>
</gene>
<comment type="function">
    <text evidence="1">Binds directly to 23S ribosomal RNA and is necessary for the in vitro assembly process of the 50S ribosomal subunit. It is not involved in the protein synthesizing functions of that subunit.</text>
</comment>
<comment type="similarity">
    <text evidence="1">Belongs to the bacterial ribosomal protein bL20 family.</text>
</comment>
<proteinExistence type="inferred from homology"/>
<sequence length="117" mass="13685">MPRVKTGTNRRRRHKKVLKLAKGYRGTKGNLFRIANQQVMKSLTYAYRDRKQRKREFRRLWISRINAACRQNGISYNKFINGLKKAGVEINRKMLADMAVNDEQAFGELVDLAKKSV</sequence>
<protein>
    <recommendedName>
        <fullName evidence="1">Large ribosomal subunit protein bL20</fullName>
    </recommendedName>
    <alternativeName>
        <fullName evidence="2">50S ribosomal protein L20</fullName>
    </alternativeName>
</protein>